<keyword id="KW-1015">Disulfide bond</keyword>
<keyword id="KW-0325">Glycoprotein</keyword>
<keyword id="KW-1039">Host endosome</keyword>
<keyword id="KW-1040">Host Golgi apparatus</keyword>
<keyword id="KW-1043">Host membrane</keyword>
<keyword id="KW-1048">Host nucleus</keyword>
<keyword id="KW-0472">Membrane</keyword>
<keyword id="KW-1185">Reference proteome</keyword>
<keyword id="KW-0812">Transmembrane</keyword>
<keyword id="KW-1133">Transmembrane helix</keyword>
<keyword id="KW-0261">Viral envelope protein</keyword>
<keyword id="KW-0946">Virion</keyword>
<organism>
    <name type="scientific">Gallid herpesvirus 2 (strain Chicken/Md5/ATCC VR-987)</name>
    <name type="common">GaHV-2</name>
    <name type="synonym">Marek's disease herpesvirus type 1</name>
    <dbReference type="NCBI Taxonomy" id="10389"/>
    <lineage>
        <taxon>Viruses</taxon>
        <taxon>Duplodnaviria</taxon>
        <taxon>Heunggongvirae</taxon>
        <taxon>Peploviricota</taxon>
        <taxon>Herviviricetes</taxon>
        <taxon>Herpesvirales</taxon>
        <taxon>Orthoherpesviridae</taxon>
        <taxon>Alphaherpesvirinae</taxon>
        <taxon>Mardivirus</taxon>
        <taxon>Mardivirus gallidalpha2</taxon>
        <taxon>Gallid alphaherpesvirus 2</taxon>
    </lineage>
</organism>
<comment type="function">
    <text evidence="1">Envelope glycoprotein important for virion assembly and egress. Plays a role in the correct incorporation of gH-gL into virion membrane. Directs the glycoprotein N (gN) to the host trans-Golgi network.</text>
</comment>
<comment type="subunit">
    <text evidence="1">Interacts (via N-terminus) with gN (via N-terminus). The gM-gN heterodimer forms the gCII complex.</text>
</comment>
<comment type="subcellular location">
    <subcellularLocation>
        <location evidence="1">Virion membrane</location>
        <topology evidence="1">Multi-pass membrane protein</topology>
    </subcellularLocation>
    <subcellularLocation>
        <location evidence="1">Host Golgi apparatus</location>
        <location evidence="1">Host trans-Golgi network</location>
    </subcellularLocation>
    <subcellularLocation>
        <location evidence="1">Host endosome membrane</location>
        <topology evidence="1">Multi-pass membrane protein</topology>
    </subcellularLocation>
    <subcellularLocation>
        <location evidence="1">Host nucleus inner membrane</location>
        <topology evidence="1">Multi-pass membrane protein</topology>
    </subcellularLocation>
    <text evidence="1">During virion morphogenesis, this protein accumulates in the trans-Golgi network where secondary envelopment occurs.</text>
</comment>
<comment type="similarity">
    <text evidence="1">Belongs to the herpesviridae glycoprotein M family.</text>
</comment>
<evidence type="ECO:0000255" key="1">
    <source>
        <dbReference type="HAMAP-Rule" id="MF_04035"/>
    </source>
</evidence>
<evidence type="ECO:0000256" key="2">
    <source>
        <dbReference type="SAM" id="MobiDB-lite"/>
    </source>
</evidence>
<dbReference type="EMBL" id="AF243438">
    <property type="protein sequence ID" value="AAG14202.1"/>
    <property type="molecule type" value="Genomic_DNA"/>
</dbReference>
<dbReference type="RefSeq" id="YP_001033938.1">
    <property type="nucleotide sequence ID" value="NC_002229.3"/>
</dbReference>
<dbReference type="SMR" id="Q9E6Q6"/>
<dbReference type="GeneID" id="4811483"/>
<dbReference type="KEGG" id="vg:4811483"/>
<dbReference type="Proteomes" id="UP000008072">
    <property type="component" value="Segment"/>
</dbReference>
<dbReference type="GO" id="GO:0044175">
    <property type="term" value="C:host cell endosome membrane"/>
    <property type="evidence" value="ECO:0007669"/>
    <property type="project" value="UniProtKB-SubCell"/>
</dbReference>
<dbReference type="GO" id="GO:0044177">
    <property type="term" value="C:host cell Golgi apparatus"/>
    <property type="evidence" value="ECO:0007669"/>
    <property type="project" value="UniProtKB-SubCell"/>
</dbReference>
<dbReference type="GO" id="GO:0044201">
    <property type="term" value="C:host cell nuclear inner membrane"/>
    <property type="evidence" value="ECO:0007669"/>
    <property type="project" value="UniProtKB-SubCell"/>
</dbReference>
<dbReference type="GO" id="GO:0016020">
    <property type="term" value="C:membrane"/>
    <property type="evidence" value="ECO:0007669"/>
    <property type="project" value="UniProtKB-KW"/>
</dbReference>
<dbReference type="GO" id="GO:0019031">
    <property type="term" value="C:viral envelope"/>
    <property type="evidence" value="ECO:0007669"/>
    <property type="project" value="UniProtKB-KW"/>
</dbReference>
<dbReference type="GO" id="GO:0055036">
    <property type="term" value="C:virion membrane"/>
    <property type="evidence" value="ECO:0007669"/>
    <property type="project" value="UniProtKB-SubCell"/>
</dbReference>
<dbReference type="HAMAP" id="MF_04035">
    <property type="entry name" value="HSV_GM"/>
    <property type="match status" value="1"/>
</dbReference>
<dbReference type="InterPro" id="IPR000785">
    <property type="entry name" value="Herpes_glycop_M"/>
</dbReference>
<dbReference type="Pfam" id="PF01528">
    <property type="entry name" value="Herpes_glycop"/>
    <property type="match status" value="1"/>
</dbReference>
<dbReference type="PRINTS" id="PR00333">
    <property type="entry name" value="HSVINTEGRLMP"/>
</dbReference>
<protein>
    <recommendedName>
        <fullName evidence="1">Envelope glycoprotein M</fullName>
        <shortName evidence="1">gM</shortName>
    </recommendedName>
</protein>
<reference key="1">
    <citation type="journal article" date="2000" name="J. Virol.">
        <title>The genome of a very virulent Marek's disease virus.</title>
        <authorList>
            <person name="Tulman E.R."/>
            <person name="Afonso C.L."/>
            <person name="Lu Z."/>
            <person name="Zsak L."/>
            <person name="Rock D.L."/>
            <person name="Kutish G.F."/>
        </authorList>
    </citation>
    <scope>NUCLEOTIDE SEQUENCE [LARGE SCALE GENOMIC DNA]</scope>
</reference>
<name>GM_GAHVM</name>
<proteinExistence type="inferred from homology"/>
<gene>
    <name evidence="1" type="primary">gM</name>
    <name type="ORF">MDV022</name>
</gene>
<organismHost>
    <name type="scientific">Gallus gallus</name>
    <name type="common">Chicken</name>
    <dbReference type="NCBI Taxonomy" id="9031"/>
</organismHost>
<accession>Q9E6Q6</accession>
<sequence length="424" mass="47527">MASRARMERNYRGLSHIDYVHKKMWVVQAVCFGIAVLVFFGTLVAASINLTEGFPCFFAAVVDYRTVNTTLVHTGLTYPRLGGVVPVLFFQTKAVVFFFYATSIVFVFLVCYITVGAIISSKKHVGAAYMGSGAFVFSLMASPLTILLGTVSIWLLQAVVIVLAHKLIVLAAAVYLVHFSTITFFYGYFCGRGVDSKVYAEDISSAKDIDGSLHKLIGNVRAMMVNLLSIVYSIILIMSSLMFGMLLANSFTLKFWHVIVTVLITTSVLTLIYLLVIEFLIARYVHIILGAYIGLLIGYGMLWTTTCDYVNRFYYAMGANASNLRIACHSVLAVFTVLILLAMVVRLIRASLYHRRRSTRAYAKAMKLQQNVKHRLRQLRRSYKQRGSQSEDERALTQSRSAEASDEDTIYDRVYSGSESEWDD</sequence>
<feature type="chain" id="PRO_0000406501" description="Envelope glycoprotein M">
    <location>
        <begin position="1"/>
        <end position="424"/>
    </location>
</feature>
<feature type="topological domain" description="Intravirion" evidence="1">
    <location>
        <begin position="1"/>
        <end position="23"/>
    </location>
</feature>
<feature type="transmembrane region" description="Helical" evidence="1">
    <location>
        <begin position="24"/>
        <end position="44"/>
    </location>
</feature>
<feature type="topological domain" description="Virion surface" evidence="1">
    <location>
        <begin position="45"/>
        <end position="94"/>
    </location>
</feature>
<feature type="transmembrane region" description="Helical" evidence="1">
    <location>
        <begin position="95"/>
        <end position="115"/>
    </location>
</feature>
<feature type="topological domain" description="Intravirion" evidence="1">
    <location>
        <begin position="116"/>
        <end position="143"/>
    </location>
</feature>
<feature type="transmembrane region" description="Helical" evidence="1">
    <location>
        <begin position="144"/>
        <end position="164"/>
    </location>
</feature>
<feature type="topological domain" description="Virion surface" evidence="1">
    <location>
        <begin position="165"/>
        <end position="166"/>
    </location>
</feature>
<feature type="transmembrane region" description="Helical" evidence="1">
    <location>
        <begin position="167"/>
        <end position="187"/>
    </location>
</feature>
<feature type="topological domain" description="Intravirion" evidence="1">
    <location>
        <begin position="188"/>
        <end position="226"/>
    </location>
</feature>
<feature type="transmembrane region" description="Helical" evidence="1">
    <location>
        <begin position="227"/>
        <end position="247"/>
    </location>
</feature>
<feature type="topological domain" description="Virion surface" evidence="1">
    <location>
        <begin position="248"/>
        <end position="261"/>
    </location>
</feature>
<feature type="transmembrane region" description="Helical" evidence="1">
    <location>
        <begin position="262"/>
        <end position="282"/>
    </location>
</feature>
<feature type="topological domain" description="Intravirion" evidence="1">
    <location>
        <position position="283"/>
    </location>
</feature>
<feature type="transmembrane region" description="Helical" evidence="1">
    <location>
        <begin position="284"/>
        <end position="304"/>
    </location>
</feature>
<feature type="topological domain" description="Virion surface" evidence="1">
    <location>
        <begin position="305"/>
        <end position="327"/>
    </location>
</feature>
<feature type="transmembrane region" description="Helical" evidence="1">
    <location>
        <begin position="328"/>
        <end position="348"/>
    </location>
</feature>
<feature type="topological domain" description="Intravirion" evidence="1">
    <location>
        <begin position="349"/>
        <end position="424"/>
    </location>
</feature>
<feature type="region of interest" description="Disordered" evidence="2">
    <location>
        <begin position="382"/>
        <end position="424"/>
    </location>
</feature>
<feature type="disulfide bond" description="Interchain (with gN)" evidence="1">
    <location>
        <position position="56"/>
    </location>
</feature>